<dbReference type="EMBL" id="AB032726">
    <property type="protein sequence ID" value="BAA95119.1"/>
    <property type="molecule type" value="mRNA"/>
</dbReference>
<dbReference type="EMBL" id="BC049453">
    <property type="protein sequence ID" value="AAH49453.1"/>
    <property type="molecule type" value="mRNA"/>
</dbReference>
<dbReference type="RefSeq" id="NP_001315342.1">
    <molecule id="Q9IBD0-2"/>
    <property type="nucleotide sequence ID" value="NM_001328413.1"/>
</dbReference>
<dbReference type="RefSeq" id="NP_571688.1">
    <molecule id="Q9IBD0-1"/>
    <property type="nucleotide sequence ID" value="NM_131613.2"/>
</dbReference>
<dbReference type="RefSeq" id="XP_017212394.1">
    <property type="nucleotide sequence ID" value="XM_017356905.1"/>
</dbReference>
<dbReference type="SMR" id="Q9IBD0"/>
<dbReference type="FunCoup" id="Q9IBD0">
    <property type="interactions" value="1491"/>
</dbReference>
<dbReference type="STRING" id="7955.ENSDARP00000041054"/>
<dbReference type="PaxDb" id="7955-ENSDARP00000111278"/>
<dbReference type="Ensembl" id="ENSDART00000134570">
    <molecule id="Q9IBD0-1"/>
    <property type="protein sequence ID" value="ENSDARP00000115192"/>
    <property type="gene ID" value="ENSDARG00000005315"/>
</dbReference>
<dbReference type="GeneID" id="58137"/>
<dbReference type="KEGG" id="dre:58137"/>
<dbReference type="AGR" id="ZFIN:ZDB-GENE-000501-1"/>
<dbReference type="CTD" id="10658"/>
<dbReference type="ZFIN" id="ZDB-GENE-000501-1">
    <property type="gene designation" value="celf1"/>
</dbReference>
<dbReference type="eggNOG" id="KOG0144">
    <property type="taxonomic scope" value="Eukaryota"/>
</dbReference>
<dbReference type="HOGENOM" id="CLU_015367_0_0_1"/>
<dbReference type="InParanoid" id="Q9IBD0"/>
<dbReference type="OMA" id="FPCHPAP"/>
<dbReference type="OrthoDB" id="410044at2759"/>
<dbReference type="PhylomeDB" id="Q9IBD0"/>
<dbReference type="PRO" id="PR:Q9IBD0"/>
<dbReference type="Proteomes" id="UP000000437">
    <property type="component" value="Chromosome 7"/>
</dbReference>
<dbReference type="Bgee" id="ENSDARG00000005315">
    <property type="expression patterns" value="Expressed in mature ovarian follicle and 39 other cell types or tissues"/>
</dbReference>
<dbReference type="ExpressionAtlas" id="Q9IBD0">
    <property type="expression patterns" value="baseline and differential"/>
</dbReference>
<dbReference type="GO" id="GO:0005737">
    <property type="term" value="C:cytoplasm"/>
    <property type="evidence" value="ECO:0000314"/>
    <property type="project" value="ZFIN"/>
</dbReference>
<dbReference type="GO" id="GO:0005634">
    <property type="term" value="C:nucleus"/>
    <property type="evidence" value="ECO:0000318"/>
    <property type="project" value="GO_Central"/>
</dbReference>
<dbReference type="GO" id="GO:0045495">
    <property type="term" value="C:pole plasm"/>
    <property type="evidence" value="ECO:0000314"/>
    <property type="project" value="ZFIN"/>
</dbReference>
<dbReference type="GO" id="GO:1990904">
    <property type="term" value="C:ribonucleoprotein complex"/>
    <property type="evidence" value="ECO:0000318"/>
    <property type="project" value="GO_Central"/>
</dbReference>
<dbReference type="GO" id="GO:0003730">
    <property type="term" value="F:mRNA 3'-UTR binding"/>
    <property type="evidence" value="ECO:0000314"/>
    <property type="project" value="ZFIN"/>
</dbReference>
<dbReference type="GO" id="GO:0003729">
    <property type="term" value="F:mRNA binding"/>
    <property type="evidence" value="ECO:0000314"/>
    <property type="project" value="ZFIN"/>
</dbReference>
<dbReference type="GO" id="GO:0016477">
    <property type="term" value="P:cell migration"/>
    <property type="evidence" value="ECO:0000315"/>
    <property type="project" value="CACAO"/>
</dbReference>
<dbReference type="GO" id="GO:0007368">
    <property type="term" value="P:determination of left/right symmetry"/>
    <property type="evidence" value="ECO:0000315"/>
    <property type="project" value="ZFIN"/>
</dbReference>
<dbReference type="GO" id="GO:0048588">
    <property type="term" value="P:developmental cell growth"/>
    <property type="evidence" value="ECO:0000315"/>
    <property type="project" value="CACAO"/>
</dbReference>
<dbReference type="GO" id="GO:0048565">
    <property type="term" value="P:digestive tract development"/>
    <property type="evidence" value="ECO:0000315"/>
    <property type="project" value="ZFIN"/>
</dbReference>
<dbReference type="GO" id="GO:1990402">
    <property type="term" value="P:embryonic liver development"/>
    <property type="evidence" value="ECO:0000315"/>
    <property type="project" value="ZFIN"/>
</dbReference>
<dbReference type="GO" id="GO:0061031">
    <property type="term" value="P:endodermal digestive tract morphogenesis"/>
    <property type="evidence" value="ECO:0000315"/>
    <property type="project" value="ZFIN"/>
</dbReference>
<dbReference type="GO" id="GO:0070306">
    <property type="term" value="P:lens fiber cell differentiation"/>
    <property type="evidence" value="ECO:0000315"/>
    <property type="project" value="ZFIN"/>
</dbReference>
<dbReference type="GO" id="GO:0001889">
    <property type="term" value="P:liver development"/>
    <property type="evidence" value="ECO:0000315"/>
    <property type="project" value="CACAO"/>
</dbReference>
<dbReference type="GO" id="GO:0006376">
    <property type="term" value="P:mRNA splice site recognition"/>
    <property type="evidence" value="ECO:0000318"/>
    <property type="project" value="GO_Central"/>
</dbReference>
<dbReference type="GO" id="GO:0031016">
    <property type="term" value="P:pancreas development"/>
    <property type="evidence" value="ECO:0000315"/>
    <property type="project" value="ZFIN"/>
</dbReference>
<dbReference type="GO" id="GO:0061113">
    <property type="term" value="P:pancreas morphogenesis"/>
    <property type="evidence" value="ECO:0000315"/>
    <property type="project" value="CACAO"/>
</dbReference>
<dbReference type="GO" id="GO:0061014">
    <property type="term" value="P:positive regulation of mRNA catabolic process"/>
    <property type="evidence" value="ECO:0000315"/>
    <property type="project" value="ZFIN"/>
</dbReference>
<dbReference type="GO" id="GO:0000381">
    <property type="term" value="P:regulation of alternative mRNA splicing, via spliceosome"/>
    <property type="evidence" value="ECO:0000318"/>
    <property type="project" value="GO_Central"/>
</dbReference>
<dbReference type="CDD" id="cd12631">
    <property type="entry name" value="RRM1_CELF1_2_Bruno"/>
    <property type="match status" value="1"/>
</dbReference>
<dbReference type="CDD" id="cd12634">
    <property type="entry name" value="RRM2_CELF1_2"/>
    <property type="match status" value="1"/>
</dbReference>
<dbReference type="CDD" id="cd12638">
    <property type="entry name" value="RRM3_CELF1_2"/>
    <property type="match status" value="1"/>
</dbReference>
<dbReference type="FunFam" id="3.30.70.330:FF:000013">
    <property type="entry name" value="CUGBP Elav-like family member 1 isoform 2"/>
    <property type="match status" value="1"/>
</dbReference>
<dbReference type="FunFam" id="3.30.70.330:FF:000015">
    <property type="entry name" value="CUGBP Elav-like family member 1 isoform 2"/>
    <property type="match status" value="1"/>
</dbReference>
<dbReference type="FunFam" id="3.30.70.330:FF:000016">
    <property type="entry name" value="CUGBP Elav-like family member 1 isoform 2"/>
    <property type="match status" value="1"/>
</dbReference>
<dbReference type="Gene3D" id="3.30.70.330">
    <property type="match status" value="3"/>
</dbReference>
<dbReference type="InterPro" id="IPR034196">
    <property type="entry name" value="CELF1/2_RRM1"/>
</dbReference>
<dbReference type="InterPro" id="IPR034198">
    <property type="entry name" value="CELF1/2_RRM2"/>
</dbReference>
<dbReference type="InterPro" id="IPR034199">
    <property type="entry name" value="CELF1/2_RRM3"/>
</dbReference>
<dbReference type="InterPro" id="IPR002343">
    <property type="entry name" value="Hud_Sxl_RNA"/>
</dbReference>
<dbReference type="InterPro" id="IPR012677">
    <property type="entry name" value="Nucleotide-bd_a/b_plait_sf"/>
</dbReference>
<dbReference type="InterPro" id="IPR035979">
    <property type="entry name" value="RBD_domain_sf"/>
</dbReference>
<dbReference type="InterPro" id="IPR000504">
    <property type="entry name" value="RRM_dom"/>
</dbReference>
<dbReference type="PANTHER" id="PTHR24012">
    <property type="entry name" value="RNA BINDING PROTEIN"/>
    <property type="match status" value="1"/>
</dbReference>
<dbReference type="Pfam" id="PF00076">
    <property type="entry name" value="RRM_1"/>
    <property type="match status" value="3"/>
</dbReference>
<dbReference type="PRINTS" id="PR00961">
    <property type="entry name" value="HUDSXLRNA"/>
</dbReference>
<dbReference type="SMART" id="SM00360">
    <property type="entry name" value="RRM"/>
    <property type="match status" value="3"/>
</dbReference>
<dbReference type="SUPFAM" id="SSF54928">
    <property type="entry name" value="RNA-binding domain, RBD"/>
    <property type="match status" value="2"/>
</dbReference>
<dbReference type="PROSITE" id="PS50102">
    <property type="entry name" value="RRM"/>
    <property type="match status" value="3"/>
</dbReference>
<feature type="chain" id="PRO_0000295185" description="CUGBP Elav-like family member 1">
    <location>
        <begin position="1"/>
        <end position="501"/>
    </location>
</feature>
<feature type="domain" description="RRM 1" evidence="2">
    <location>
        <begin position="16"/>
        <end position="99"/>
    </location>
</feature>
<feature type="domain" description="RRM 2" evidence="2">
    <location>
        <begin position="108"/>
        <end position="188"/>
    </location>
</feature>
<feature type="domain" description="RRM 3" evidence="2">
    <location>
        <begin position="416"/>
        <end position="494"/>
    </location>
</feature>
<feature type="region of interest" description="Binds strongly to URE">
    <location>
        <begin position="2"/>
        <end position="196"/>
    </location>
</feature>
<feature type="region of interest" description="Disordered" evidence="3">
    <location>
        <begin position="274"/>
        <end position="323"/>
    </location>
</feature>
<feature type="region of interest" description="Binds strongly to URE">
    <location>
        <begin position="397"/>
        <end position="501"/>
    </location>
</feature>
<feature type="compositionally biased region" description="Low complexity" evidence="3">
    <location>
        <begin position="274"/>
        <end position="298"/>
    </location>
</feature>
<feature type="compositionally biased region" description="Low complexity" evidence="3">
    <location>
        <begin position="312"/>
        <end position="323"/>
    </location>
</feature>
<feature type="splice variant" id="VSP_026791" description="In isoform 2." evidence="6">
    <original>M</original>
    <variation>MDSIEAEALYLTTAQHGQPQCELSLPAVEVPALGGSKKM</variation>
    <location>
        <position position="1"/>
    </location>
</feature>
<feature type="splice variant" id="VSP_026792" description="In isoform 2." evidence="6">
    <location>
        <position position="149"/>
    </location>
</feature>
<feature type="splice variant" id="VSP_026793" description="In isoform 2." evidence="6">
    <location>
        <begin position="230"/>
        <end position="233"/>
    </location>
</feature>
<gene>
    <name type="primary">celf1</name>
    <name type="synonym">brul</name>
    <name type="synonym">cugbp1</name>
</gene>
<protein>
    <recommendedName>
        <fullName>CUGBP Elav-like family member 1</fullName>
        <shortName>CELF-1</shortName>
    </recommendedName>
    <alternativeName>
        <fullName>Bruno-like protein 2</fullName>
    </alternativeName>
    <alternativeName>
        <fullName>CUG triplet repeat RNA-binding protein 1</fullName>
        <shortName>CUG-BP1</shortName>
    </alternativeName>
    <alternativeName>
        <fullName>CUG-BP- and ETR-3-like factor 1</fullName>
    </alternativeName>
    <alternativeName>
        <fullName>EDEN-BP/Bruno-like protein</fullName>
    </alternativeName>
    <alternativeName>
        <fullName>RNA-binding protein BRUNOL-2</fullName>
    </alternativeName>
</protein>
<comment type="function">
    <text evidence="1 5">RNA-binding protein implicated in the regulation of several post-transcriptional events. May be involved in mRNA translation activation and stability (By similarity). Involved in the regulation of muscle-specific splicing of alpha actinin pre-mRNAs via the binding to the UR-repeat element (URE) at the branch point of the non-muscle (NM) exon.</text>
</comment>
<comment type="subcellular location">
    <subcellularLocation>
        <location evidence="1">Nucleus</location>
    </subcellularLocation>
    <subcellularLocation>
        <location evidence="1">Cytoplasm</location>
    </subcellularLocation>
</comment>
<comment type="alternative products">
    <event type="alternative splicing"/>
    <isoform>
        <id>Q9IBD0-1</id>
        <name>1</name>
        <sequence type="displayed"/>
    </isoform>
    <isoform>
        <id>Q9IBD0-2</id>
        <name>2</name>
        <sequence type="described" ref="VSP_026791 VSP_026792 VSP_026793"/>
    </isoform>
</comment>
<comment type="developmental stage">
    <text evidence="4">Expressed in the vegetal cortex of the oocyte. Expressed uniformly in the embryo. Expressed in the vegetal pole at 0.08 hour post-fertilization (hpf). Expressed in the lens fiber cells at 24 hpf and in the blastodisc of the zygote at 30 hpf.</text>
</comment>
<comment type="similarity">
    <text evidence="7">Belongs to the CELF/BRUNOL family.</text>
</comment>
<proteinExistence type="evidence at protein level"/>
<sequence>MNGSLDHPDQPDIDSIKMFVGQIPRTWSEDQLRELFEPYGAVYEINVLRDRSQNPPQSKGCCFVTYYTRKSALEAQNALHNMKILPGMHHPIQMKPADSEKNNAVEDRKLFVGMISKKCNENDIRLMFSPYGQIEECRILRGPDGLSRGCAFVTFTARQMAQSAIKSMHQSQTMEGCSSPIVVKFADTQKDKEQKRIAQQLQQQMQQLNAASMWGNLTGLNSLGPQYLALYLQLLQQSASSGNALNNLHPMSGLNAMQNLAALAAAASATQATPTGSSALTTSSSPLSVLTSSGTPSGQPAQSAWDAYKAGSSPTSSTSSSVNPMASLGALQSLAAGAGAGLNMSSLASMAALNGGLGSGGLSNGSGSTMEALTQAAYSGIQQYAAAALPSLYSQSLLSQQNVSAAGSQKEGPEGANLFIYHLPQEFGDQDLLQMFMPFGNVISAKVFIDKQTNLSKCFGFVSYDNPVSSQAAIQSMNGFQIGMKRLKVQLKRSKNDSKPY</sequence>
<accession>Q9IBD0</accession>
<accession>Q7ZWE4</accession>
<evidence type="ECO:0000250" key="1"/>
<evidence type="ECO:0000255" key="2">
    <source>
        <dbReference type="PROSITE-ProRule" id="PRU00176"/>
    </source>
</evidence>
<evidence type="ECO:0000256" key="3">
    <source>
        <dbReference type="SAM" id="MobiDB-lite"/>
    </source>
</evidence>
<evidence type="ECO:0000269" key="4">
    <source>
    </source>
</evidence>
<evidence type="ECO:0000269" key="5">
    <source>
    </source>
</evidence>
<evidence type="ECO:0000303" key="6">
    <source ref="2"/>
</evidence>
<evidence type="ECO:0000305" key="7"/>
<keyword id="KW-0010">Activator</keyword>
<keyword id="KW-0025">Alternative splicing</keyword>
<keyword id="KW-0963">Cytoplasm</keyword>
<keyword id="KW-0507">mRNA processing</keyword>
<keyword id="KW-0508">mRNA splicing</keyword>
<keyword id="KW-0539">Nucleus</keyword>
<keyword id="KW-1185">Reference proteome</keyword>
<keyword id="KW-0677">Repeat</keyword>
<keyword id="KW-0694">RNA-binding</keyword>
<organism>
    <name type="scientific">Danio rerio</name>
    <name type="common">Zebrafish</name>
    <name type="synonym">Brachydanio rerio</name>
    <dbReference type="NCBI Taxonomy" id="7955"/>
    <lineage>
        <taxon>Eukaryota</taxon>
        <taxon>Metazoa</taxon>
        <taxon>Chordata</taxon>
        <taxon>Craniata</taxon>
        <taxon>Vertebrata</taxon>
        <taxon>Euteleostomi</taxon>
        <taxon>Actinopterygii</taxon>
        <taxon>Neopterygii</taxon>
        <taxon>Teleostei</taxon>
        <taxon>Ostariophysi</taxon>
        <taxon>Cypriniformes</taxon>
        <taxon>Danionidae</taxon>
        <taxon>Danioninae</taxon>
        <taxon>Danio</taxon>
    </lineage>
</organism>
<name>CELF1_DANRE</name>
<reference key="1">
    <citation type="journal article" date="2000" name="Mech. Dev.">
        <title>Vegetal localization of the maternal mRNA encoding an EDEN-BP/Bruno-like protein in zebrafish.</title>
        <authorList>
            <person name="Suzuki H."/>
            <person name="Maegawa S."/>
            <person name="Nishibu T."/>
            <person name="Sugiyama T."/>
            <person name="Yasuda K."/>
            <person name="Inoue K."/>
        </authorList>
    </citation>
    <scope>NUCLEOTIDE SEQUENCE [MRNA] (ISOFORM 1)</scope>
    <scope>DEVELOPMENTAL STAGE</scope>
</reference>
<reference key="2">
    <citation type="submission" date="2003-03" db="EMBL/GenBank/DDBJ databases">
        <authorList>
            <consortium name="NIH - Zebrafish Gene Collection (ZGC) project"/>
        </authorList>
    </citation>
    <scope>NUCLEOTIDE SEQUENCE [LARGE SCALE MRNA] (ISOFORM 2)</scope>
</reference>
<reference key="3">
    <citation type="journal article" date="2002" name="Genes Cells">
        <title>Regulation of alternative splicing of alpha-actinin transcript by Bruno-like proteins.</title>
        <authorList>
            <person name="Suzuki H."/>
            <person name="Jin Y."/>
            <person name="Otani H."/>
            <person name="Yasuda K."/>
            <person name="Inoue K."/>
        </authorList>
    </citation>
    <scope>FUNCTION</scope>
    <scope>RNA-BINDING</scope>
</reference>